<comment type="function">
    <text evidence="2 3 5 6">Catalyzes nitrate uptake, nitrite uptake and nitrite export across the cytoplasmic membrane. May function as a nitrate/H(+) and nitrite/H(+) channel. Could confer a selective advantage during severe nutrient starvation or slow growth.</text>
</comment>
<comment type="subcellular location">
    <subcellularLocation>
        <location evidence="4 6">Cell inner membrane</location>
        <topology evidence="4 6">Multi-pass membrane protein</topology>
    </subcellularLocation>
</comment>
<comment type="induction">
    <text evidence="5">Expressed preferentially during the stationary phase in the absence of nitrate.</text>
</comment>
<comment type="similarity">
    <text evidence="7">Belongs to the major facilitator superfamily. Nitrate/nitrite porter (TC 2.A.1.8) family.</text>
</comment>
<feature type="chain" id="PRO_0000096729" description="Nitrate/nitrite transporter NarU">
    <location>
        <begin position="1"/>
        <end position="462"/>
    </location>
</feature>
<feature type="topological domain" description="Cytoplasmic" evidence="1">
    <location>
        <begin position="1"/>
        <end position="35"/>
    </location>
</feature>
<feature type="transmembrane region" description="Helical" evidence="1">
    <location>
        <begin position="36"/>
        <end position="56"/>
    </location>
</feature>
<feature type="topological domain" description="Periplasmic" evidence="1">
    <location>
        <begin position="57"/>
        <end position="76"/>
    </location>
</feature>
<feature type="transmembrane region" description="Helical" evidence="1">
    <location>
        <begin position="77"/>
        <end position="97"/>
    </location>
</feature>
<feature type="topological domain" description="Cytoplasmic" evidence="1">
    <location>
        <begin position="98"/>
        <end position="101"/>
    </location>
</feature>
<feature type="transmembrane region" description="Helical" evidence="1">
    <location>
        <begin position="102"/>
        <end position="122"/>
    </location>
</feature>
<feature type="topological domain" description="Periplasmic" evidence="1">
    <location>
        <begin position="123"/>
        <end position="125"/>
    </location>
</feature>
<feature type="transmembrane region" description="Helical" evidence="1">
    <location>
        <begin position="126"/>
        <end position="146"/>
    </location>
</feature>
<feature type="topological domain" description="Cytoplasmic" evidence="1">
    <location>
        <begin position="147"/>
        <end position="180"/>
    </location>
</feature>
<feature type="transmembrane region" description="Helical" evidence="1">
    <location>
        <begin position="181"/>
        <end position="201"/>
    </location>
</feature>
<feature type="topological domain" description="Periplasmic" evidence="1">
    <location>
        <begin position="202"/>
        <end position="206"/>
    </location>
</feature>
<feature type="transmembrane region" description="Helical" evidence="1">
    <location>
        <begin position="207"/>
        <end position="227"/>
    </location>
</feature>
<feature type="topological domain" description="Cytoplasmic" evidence="1">
    <location>
        <begin position="228"/>
        <end position="258"/>
    </location>
</feature>
<feature type="transmembrane region" description="Helical" evidence="1">
    <location>
        <begin position="259"/>
        <end position="279"/>
    </location>
</feature>
<feature type="topological domain" description="Periplasmic" evidence="1">
    <location>
        <begin position="280"/>
        <end position="287"/>
    </location>
</feature>
<feature type="transmembrane region" description="Helical" evidence="1">
    <location>
        <begin position="288"/>
        <end position="308"/>
    </location>
</feature>
<feature type="topological domain" description="Cytoplasmic" evidence="1">
    <location>
        <begin position="309"/>
        <end position="317"/>
    </location>
</feature>
<feature type="transmembrane region" description="Helical" evidence="1">
    <location>
        <begin position="318"/>
        <end position="338"/>
    </location>
</feature>
<feature type="topological domain" description="Periplasmic" evidence="1">
    <location>
        <begin position="339"/>
        <end position="344"/>
    </location>
</feature>
<feature type="transmembrane region" description="Helical" evidence="1">
    <location>
        <begin position="345"/>
        <end position="365"/>
    </location>
</feature>
<feature type="topological domain" description="Cytoplasmic" evidence="1">
    <location>
        <begin position="366"/>
        <end position="401"/>
    </location>
</feature>
<feature type="transmembrane region" description="Helical" evidence="1">
    <location>
        <begin position="402"/>
        <end position="422"/>
    </location>
</feature>
<feature type="topological domain" description="Periplasmic" evidence="1">
    <location>
        <begin position="423"/>
        <end position="432"/>
    </location>
</feature>
<feature type="transmembrane region" description="Helical" evidence="1">
    <location>
        <begin position="433"/>
        <end position="453"/>
    </location>
</feature>
<feature type="topological domain" description="Cytoplasmic" evidence="1">
    <location>
        <begin position="454"/>
        <end position="462"/>
    </location>
</feature>
<feature type="mutagenesis site" description="Loss of activity." evidence="3 6">
    <original>R</original>
    <variation>F</variation>
    <variation>H</variation>
    <variation>K</variation>
    <variation>L</variation>
    <variation>N</variation>
    <variation>P</variation>
    <variation>Q</variation>
    <location>
        <position position="87"/>
    </location>
</feature>
<feature type="mutagenesis site" description="No change in activity." evidence="6">
    <original>G</original>
    <variation>A</variation>
    <location>
        <position position="99"/>
    </location>
</feature>
<feature type="mutagenesis site" description="Decrease in activity." evidence="6">
    <original>G</original>
    <variation>T</variation>
    <location>
        <position position="99"/>
    </location>
</feature>
<feature type="mutagenesis site" description="No change in activity." evidence="6">
    <original>P</original>
    <variation>A</variation>
    <location>
        <position position="113"/>
    </location>
</feature>
<feature type="mutagenesis site" description="Decrease in activity." evidence="6">
    <original>P</original>
    <variation>C</variation>
    <variation>L</variation>
    <location>
        <position position="113"/>
    </location>
</feature>
<feature type="mutagenesis site" description="Loss of activity." evidence="6">
    <original>G</original>
    <variation>E</variation>
    <variation>I</variation>
    <location>
        <position position="139"/>
    </location>
</feature>
<feature type="mutagenesis site" description="Loss of activity." evidence="6">
    <original>F</original>
    <variation>E</variation>
    <variation>W</variation>
    <location>
        <position position="145"/>
    </location>
</feature>
<feature type="mutagenesis site" description="Loss of activity." evidence="6">
    <original>G</original>
    <variation>A</variation>
    <variation>S</variation>
    <location>
        <position position="162"/>
    </location>
</feature>
<feature type="mutagenesis site" description="No change in activity." evidence="6">
    <original>G</original>
    <variation>A</variation>
    <location>
        <position position="172"/>
    </location>
</feature>
<feature type="mutagenesis site" description="Loss of activity." evidence="6">
    <original>G</original>
    <variation>V</variation>
    <location>
        <position position="172"/>
    </location>
</feature>
<feature type="mutagenesis site" description="Loss of activity." evidence="6">
    <original>G</original>
    <variation>A</variation>
    <variation>S</variation>
    <location>
        <position position="175"/>
    </location>
</feature>
<feature type="mutagenesis site" description="No change in activity." evidence="6">
    <original>Y</original>
    <variation>N</variation>
    <location>
        <position position="261"/>
    </location>
</feature>
<feature type="mutagenesis site" description="Loss of activity." evidence="6">
    <original>G</original>
    <variation>A</variation>
    <variation>P</variation>
    <variation>T</variation>
    <location>
        <position position="266"/>
    </location>
</feature>
<feature type="mutagenesis site" description="Loss of activity." evidence="3 6">
    <original>R</original>
    <variation>C</variation>
    <variation>D</variation>
    <variation>K</variation>
    <variation>L</variation>
    <variation>N</variation>
    <variation>P</variation>
    <variation>Q</variation>
    <location>
        <position position="303"/>
    </location>
</feature>
<feature type="mutagenesis site" description="Loss of activity." evidence="6">
    <original>G</original>
    <variation>L</variation>
    <location>
        <position position="307"/>
    </location>
</feature>
<feature type="mutagenesis site" description="Loss of activity." evidence="6">
    <original>D</original>
    <variation>G</variation>
    <variation>K</variation>
    <location>
        <position position="311"/>
    </location>
</feature>
<feature type="mutagenesis site" description="Loss of activity." evidence="6">
    <original>G</original>
    <variation>A</variation>
    <variation>L</variation>
    <variation>V</variation>
    <location>
        <position position="405"/>
    </location>
</feature>
<feature type="mutagenesis site" description="No change in activity." evidence="6">
    <original>G</original>
    <variation>L</variation>
    <location>
        <position position="414"/>
    </location>
</feature>
<feature type="sequence conflict" description="In Ref. 1." evidence="7" ref="1">
    <location>
        <position position="290"/>
    </location>
</feature>
<feature type="sequence conflict" description="In Ref. 1." evidence="7" ref="1">
    <original>F</original>
    <variation>FR</variation>
    <location>
        <position position="293"/>
    </location>
</feature>
<feature type="helix" evidence="9">
    <location>
        <begin position="21"/>
        <end position="27"/>
    </location>
</feature>
<feature type="helix" evidence="9">
    <location>
        <begin position="29"/>
        <end position="50"/>
    </location>
</feature>
<feature type="helix" evidence="9">
    <location>
        <begin position="52"/>
        <end position="55"/>
    </location>
</feature>
<feature type="helix" evidence="9">
    <location>
        <begin position="57"/>
        <end position="60"/>
    </location>
</feature>
<feature type="turn" evidence="9">
    <location>
        <begin position="61"/>
        <end position="64"/>
    </location>
</feature>
<feature type="helix" evidence="9">
    <location>
        <begin position="69"/>
        <end position="77"/>
    </location>
</feature>
<feature type="helix" evidence="9">
    <location>
        <begin position="79"/>
        <end position="83"/>
    </location>
</feature>
<feature type="turn" evidence="9">
    <location>
        <begin position="84"/>
        <end position="86"/>
    </location>
</feature>
<feature type="helix" evidence="9">
    <location>
        <begin position="87"/>
        <end position="108"/>
    </location>
</feature>
<feature type="helix" evidence="9">
    <location>
        <begin position="111"/>
        <end position="120"/>
    </location>
</feature>
<feature type="helix" evidence="9">
    <location>
        <begin position="128"/>
        <end position="139"/>
    </location>
</feature>
<feature type="helix" evidence="9">
    <location>
        <begin position="140"/>
        <end position="142"/>
    </location>
</feature>
<feature type="helix" evidence="9">
    <location>
        <begin position="144"/>
        <end position="153"/>
    </location>
</feature>
<feature type="turn" evidence="9">
    <location>
        <begin position="158"/>
        <end position="160"/>
    </location>
</feature>
<feature type="helix" evidence="9">
    <location>
        <begin position="161"/>
        <end position="172"/>
    </location>
</feature>
<feature type="helix" evidence="9">
    <location>
        <begin position="174"/>
        <end position="186"/>
    </location>
</feature>
<feature type="helix" evidence="9">
    <location>
        <begin position="193"/>
        <end position="195"/>
    </location>
</feature>
<feature type="strand" evidence="9">
    <location>
        <begin position="200"/>
        <end position="202"/>
    </location>
</feature>
<feature type="turn" evidence="9">
    <location>
        <begin position="203"/>
        <end position="205"/>
    </location>
</feature>
<feature type="strand" evidence="9">
    <location>
        <begin position="206"/>
        <end position="208"/>
    </location>
</feature>
<feature type="helix" evidence="9">
    <location>
        <begin position="212"/>
        <end position="215"/>
    </location>
</feature>
<feature type="helix" evidence="9">
    <location>
        <begin position="217"/>
        <end position="231"/>
    </location>
</feature>
<feature type="helix" evidence="9">
    <location>
        <begin position="245"/>
        <end position="250"/>
    </location>
</feature>
<feature type="helix" evidence="9">
    <location>
        <begin position="255"/>
        <end position="258"/>
    </location>
</feature>
<feature type="turn" evidence="9">
    <location>
        <begin position="259"/>
        <end position="265"/>
    </location>
</feature>
<feature type="helix" evidence="9">
    <location>
        <begin position="266"/>
        <end position="281"/>
    </location>
</feature>
<feature type="helix" evidence="9">
    <location>
        <begin position="288"/>
        <end position="290"/>
    </location>
</feature>
<feature type="turn" evidence="8">
    <location>
        <begin position="291"/>
        <end position="293"/>
    </location>
</feature>
<feature type="helix" evidence="9">
    <location>
        <begin position="294"/>
        <end position="309"/>
    </location>
</feature>
<feature type="turn" evidence="9">
    <location>
        <begin position="310"/>
        <end position="312"/>
    </location>
</feature>
<feature type="helix" evidence="9">
    <location>
        <begin position="315"/>
        <end position="332"/>
    </location>
</feature>
<feature type="helix" evidence="9">
    <location>
        <begin position="333"/>
        <end position="335"/>
    </location>
</feature>
<feature type="strand" evidence="9">
    <location>
        <begin position="337"/>
        <end position="341"/>
    </location>
</feature>
<feature type="helix" evidence="9">
    <location>
        <begin position="345"/>
        <end position="374"/>
    </location>
</feature>
<feature type="helix" evidence="9">
    <location>
        <begin position="396"/>
        <end position="409"/>
    </location>
</feature>
<feature type="turn" evidence="9">
    <location>
        <begin position="410"/>
        <end position="413"/>
    </location>
</feature>
<feature type="helix" evidence="9">
    <location>
        <begin position="414"/>
        <end position="428"/>
    </location>
</feature>
<feature type="strand" evidence="9">
    <location>
        <begin position="429"/>
        <end position="432"/>
    </location>
</feature>
<feature type="helix" evidence="9">
    <location>
        <begin position="433"/>
        <end position="452"/>
    </location>
</feature>
<accession>P37758</accession>
<accession>P77696</accession>
<organism>
    <name type="scientific">Escherichia coli (strain K12)</name>
    <dbReference type="NCBI Taxonomy" id="83333"/>
    <lineage>
        <taxon>Bacteria</taxon>
        <taxon>Pseudomonadati</taxon>
        <taxon>Pseudomonadota</taxon>
        <taxon>Gammaproteobacteria</taxon>
        <taxon>Enterobacterales</taxon>
        <taxon>Enterobacteriaceae</taxon>
        <taxon>Escherichia</taxon>
    </lineage>
</organism>
<keyword id="KW-0002">3D-structure</keyword>
<keyword id="KW-0997">Cell inner membrane</keyword>
<keyword id="KW-1003">Cell membrane</keyword>
<keyword id="KW-0472">Membrane</keyword>
<keyword id="KW-0534">Nitrate assimilation</keyword>
<keyword id="KW-1185">Reference proteome</keyword>
<keyword id="KW-0812">Transmembrane</keyword>
<keyword id="KW-1133">Transmembrane helix</keyword>
<keyword id="KW-0813">Transport</keyword>
<protein>
    <recommendedName>
        <fullName>Nitrate/nitrite transporter NarU</fullName>
    </recommendedName>
    <alternativeName>
        <fullName>Nitrite extrusion protein 2</fullName>
    </alternativeName>
    <alternativeName>
        <fullName>Nitrite facilitator 2</fullName>
    </alternativeName>
</protein>
<evidence type="ECO:0000255" key="1"/>
<evidence type="ECO:0000269" key="2">
    <source>
    </source>
</evidence>
<evidence type="ECO:0000269" key="3">
    <source>
    </source>
</evidence>
<evidence type="ECO:0000269" key="4">
    <source>
    </source>
</evidence>
<evidence type="ECO:0000269" key="5">
    <source>
    </source>
</evidence>
<evidence type="ECO:0000269" key="6">
    <source>
    </source>
</evidence>
<evidence type="ECO:0000305" key="7"/>
<evidence type="ECO:0007829" key="8">
    <source>
        <dbReference type="PDB" id="4IU8"/>
    </source>
</evidence>
<evidence type="ECO:0007829" key="9">
    <source>
        <dbReference type="PDB" id="4IU9"/>
    </source>
</evidence>
<reference key="1">
    <citation type="submission" date="1996-01" db="EMBL/GenBank/DDBJ databases">
        <authorList>
            <person name="Bonnefoy V."/>
            <person name="Ratouchniak J."/>
            <person name="Blasco F."/>
            <person name="Chippaux M."/>
        </authorList>
    </citation>
    <scope>NUCLEOTIDE SEQUENCE [GENOMIC DNA]</scope>
    <source>
        <strain>K12</strain>
    </source>
</reference>
<reference key="2">
    <citation type="journal article" date="1996" name="DNA Res.">
        <title>A 570-kb DNA sequence of the Escherichia coli K-12 genome corresponding to the 28.0-40.1 min region on the linkage map.</title>
        <authorList>
            <person name="Aiba H."/>
            <person name="Baba T."/>
            <person name="Fujita K."/>
            <person name="Hayashi K."/>
            <person name="Inada T."/>
            <person name="Isono K."/>
            <person name="Itoh T."/>
            <person name="Kasai H."/>
            <person name="Kashimoto K."/>
            <person name="Kimura S."/>
            <person name="Kitakawa M."/>
            <person name="Kitagawa M."/>
            <person name="Makino K."/>
            <person name="Miki T."/>
            <person name="Mizobuchi K."/>
            <person name="Mori H."/>
            <person name="Mori T."/>
            <person name="Motomura K."/>
            <person name="Nakade S."/>
            <person name="Nakamura Y."/>
            <person name="Nashimoto H."/>
            <person name="Nishio Y."/>
            <person name="Oshima T."/>
            <person name="Saito N."/>
            <person name="Sampei G."/>
            <person name="Seki Y."/>
            <person name="Sivasundaram S."/>
            <person name="Tagami H."/>
            <person name="Takeda J."/>
            <person name="Takemoto K."/>
            <person name="Takeuchi Y."/>
            <person name="Wada C."/>
            <person name="Yamamoto Y."/>
            <person name="Horiuchi T."/>
        </authorList>
    </citation>
    <scope>NUCLEOTIDE SEQUENCE [LARGE SCALE GENOMIC DNA]</scope>
    <source>
        <strain>K12 / W3110 / ATCC 27325 / DSM 5911</strain>
    </source>
</reference>
<reference key="3">
    <citation type="journal article" date="1997" name="Science">
        <title>The complete genome sequence of Escherichia coli K-12.</title>
        <authorList>
            <person name="Blattner F.R."/>
            <person name="Plunkett G. III"/>
            <person name="Bloch C.A."/>
            <person name="Perna N.T."/>
            <person name="Burland V."/>
            <person name="Riley M."/>
            <person name="Collado-Vides J."/>
            <person name="Glasner J.D."/>
            <person name="Rode C.K."/>
            <person name="Mayhew G.F."/>
            <person name="Gregor J."/>
            <person name="Davis N.W."/>
            <person name="Kirkpatrick H.A."/>
            <person name="Goeden M.A."/>
            <person name="Rose D.J."/>
            <person name="Mau B."/>
            <person name="Shao Y."/>
        </authorList>
    </citation>
    <scope>NUCLEOTIDE SEQUENCE [LARGE SCALE GENOMIC DNA]</scope>
    <source>
        <strain>K12 / MG1655 / ATCC 47076</strain>
    </source>
</reference>
<reference key="4">
    <citation type="journal article" date="2006" name="Mol. Syst. Biol.">
        <title>Highly accurate genome sequences of Escherichia coli K-12 strains MG1655 and W3110.</title>
        <authorList>
            <person name="Hayashi K."/>
            <person name="Morooka N."/>
            <person name="Yamamoto Y."/>
            <person name="Fujita K."/>
            <person name="Isono K."/>
            <person name="Choi S."/>
            <person name="Ohtsubo E."/>
            <person name="Baba T."/>
            <person name="Wanner B.L."/>
            <person name="Mori H."/>
            <person name="Horiuchi T."/>
        </authorList>
    </citation>
    <scope>NUCLEOTIDE SEQUENCE [LARGE SCALE GENOMIC DNA]</scope>
    <source>
        <strain>K12 / W3110 / ATCC 27325 / DSM 5911</strain>
    </source>
</reference>
<reference key="5">
    <citation type="journal article" date="1990" name="Mol. Gen. Genet.">
        <title>Nitrate reductases of Escherichia coli: sequence of the second nitrate reductase and comparison with that encoded by the narGHJI operon.</title>
        <authorList>
            <person name="Blasco F."/>
            <person name="Iobbi C."/>
            <person name="Ratouchniak J."/>
            <person name="Bonnefoy V."/>
            <person name="Chippaux M."/>
        </authorList>
    </citation>
    <scope>NUCLEOTIDE SEQUENCE [GENOMIC DNA] OF 410-462</scope>
</reference>
<reference key="6">
    <citation type="journal article" date="1994" name="Antonie Van Leeuwenhoek">
        <title>Nitrate reductases in Escherichia coli.</title>
        <authorList>
            <person name="Bonnefoy V."/>
            <person name="Demoss J.A."/>
        </authorList>
    </citation>
    <scope>IDENTIFICATION</scope>
</reference>
<reference key="7">
    <citation type="journal article" date="2002" name="Mol. Microbiol.">
        <title>The roles of the polytopic membrane proteins NarK, NarU and NirC in Escherichia coli K-12: two nitrate and three nitrite transporters.</title>
        <authorList>
            <person name="Clegg S."/>
            <person name="Yu F."/>
            <person name="Griffiths L."/>
            <person name="Cole J.A."/>
        </authorList>
    </citation>
    <scope>FUNCTION</scope>
    <source>
        <strain>K12</strain>
    </source>
</reference>
<reference key="8">
    <citation type="journal article" date="2005" name="Biochem. Soc. Trans.">
        <title>Nitrate and nitrite transport in Escherichia coli.</title>
        <authorList>
            <person name="Jia W."/>
            <person name="Cole J.A."/>
        </authorList>
    </citation>
    <scope>FUNCTION</scope>
    <scope>MUTAGENESIS OF ARG-87 AND ARG-303</scope>
</reference>
<reference key="9">
    <citation type="journal article" date="2005" name="Science">
        <title>Global topology analysis of the Escherichia coli inner membrane proteome.</title>
        <authorList>
            <person name="Daley D.O."/>
            <person name="Rapp M."/>
            <person name="Granseth E."/>
            <person name="Melen K."/>
            <person name="Drew D."/>
            <person name="von Heijne G."/>
        </authorList>
    </citation>
    <scope>TOPOLOGY [LARGE SCALE ANALYSIS]</scope>
    <scope>SUBCELLULAR LOCATION</scope>
    <source>
        <strain>K12 / MG1655 / ATCC 47076</strain>
    </source>
</reference>
<reference key="10">
    <citation type="journal article" date="2006" name="Microbiology">
        <title>Role of the Escherichia coli nitrate transport protein, NarU, in survival during severe nutrient starvation and slow growth.</title>
        <authorList>
            <person name="Clegg S.J."/>
            <person name="Jia W."/>
            <person name="Cole J.A."/>
        </authorList>
    </citation>
    <scope>FUNCTION</scope>
    <scope>INDUCTION</scope>
    <source>
        <strain>K12</strain>
    </source>
</reference>
<reference key="11">
    <citation type="journal article" date="2009" name="Biochem. J.">
        <title>A single channel for nitrate uptake, nitrite export and nitrite uptake by Escherichia coli NarU and a role for NirC in nitrite export and uptake.</title>
        <authorList>
            <person name="Jia W."/>
            <person name="Tovell N."/>
            <person name="Clegg S."/>
            <person name="Trimmer M."/>
            <person name="Cole J."/>
        </authorList>
    </citation>
    <scope>FUNCTION</scope>
    <scope>SUBCELLULAR LOCATION</scope>
    <scope>MUTAGENESIS OF ARG-87; GLY-99; PRO-113; GLY-139; PHE-145; GLY-162; GLY-172; GLY-175; TYR-261; GLY-266; ARG-303; GLY-307; ASP-311; GLY-405 AND GLY-414</scope>
</reference>
<name>NARU_ECOLI</name>
<sequence length="462" mass="49890">MALQNEKNSRYLLRDWKPENPAFWENKGKHIARRNLWISVSCLLLAFCVWMLFSAVTVNLNKIGFNFTTDQLFLLTALPSVSGALLRVPYSFMVPIFGGRRWTVFSTAILIIPCVWLGIAVQNPNTPFGIFIVIALLCGFAGANFASSMGNISFFFPKAKQGSALGINGGLGNLGVSVMQLVAPLVIFVPVFAFLGVNGVPQADGSVMSLANAAWIWVPLLAIATIAAWSGMNDIASSRASIADQLPVLQRLHLWLLSLLYLATFGSFIGFSAGFAMLAKTQFPDVNILRLAFFGPFIGAIARSVGGAISDKFGGVRVTLINFIFMAIFSALLFLTLPGTGSGNFIAFYAVFMGLFLTAGLGSGSTFQMIAVIFRQITIYRVKMKGGSDEQAHKEAVTETAAALGFISAIGAVGGFFIPQAFGMSLNMTGSPVGAMKVFLIFYIVCVLLTWLVYGRRKFSQK</sequence>
<proteinExistence type="evidence at protein level"/>
<dbReference type="EMBL" id="X94992">
    <property type="protein sequence ID" value="CAA64448.1"/>
    <property type="molecule type" value="Genomic_DNA"/>
</dbReference>
<dbReference type="EMBL" id="U00096">
    <property type="protein sequence ID" value="AAD13433.1"/>
    <property type="molecule type" value="Genomic_DNA"/>
</dbReference>
<dbReference type="EMBL" id="AP009048">
    <property type="protein sequence ID" value="BAA15118.1"/>
    <property type="molecule type" value="Genomic_DNA"/>
</dbReference>
<dbReference type="EMBL" id="X17110">
    <property type="status" value="NOT_ANNOTATED_CDS"/>
    <property type="molecule type" value="Genomic_DNA"/>
</dbReference>
<dbReference type="PIR" id="H64899">
    <property type="entry name" value="S11431"/>
</dbReference>
<dbReference type="RefSeq" id="NP_415986.1">
    <property type="nucleotide sequence ID" value="NC_000913.3"/>
</dbReference>
<dbReference type="RefSeq" id="WP_001207901.1">
    <property type="nucleotide sequence ID" value="NZ_SSZK01000038.1"/>
</dbReference>
<dbReference type="PDB" id="4IU8">
    <property type="method" value="X-ray"/>
    <property type="resolution" value="3.11 A"/>
    <property type="chains" value="A/B=1-462"/>
</dbReference>
<dbReference type="PDB" id="4IU9">
    <property type="method" value="X-ray"/>
    <property type="resolution" value="3.00 A"/>
    <property type="chains" value="A/B=1-462"/>
</dbReference>
<dbReference type="PDBsum" id="4IU8"/>
<dbReference type="PDBsum" id="4IU9"/>
<dbReference type="SMR" id="P37758"/>
<dbReference type="BioGRID" id="4260180">
    <property type="interactions" value="13"/>
</dbReference>
<dbReference type="FunCoup" id="P37758">
    <property type="interactions" value="160"/>
</dbReference>
<dbReference type="STRING" id="511145.b1469"/>
<dbReference type="TCDB" id="2.A.1.8.10">
    <property type="family name" value="the major facilitator superfamily (mfs)"/>
</dbReference>
<dbReference type="jPOST" id="P37758"/>
<dbReference type="PaxDb" id="511145-b1469"/>
<dbReference type="EnsemblBacteria" id="AAD13433">
    <property type="protein sequence ID" value="AAD13433"/>
    <property type="gene ID" value="b1469"/>
</dbReference>
<dbReference type="GeneID" id="945799"/>
<dbReference type="KEGG" id="ecj:JW1464"/>
<dbReference type="KEGG" id="eco:b1469"/>
<dbReference type="KEGG" id="ecoc:C3026_08525"/>
<dbReference type="PATRIC" id="fig|1411691.4.peg.799"/>
<dbReference type="EchoBASE" id="EB2073"/>
<dbReference type="eggNOG" id="COG2223">
    <property type="taxonomic scope" value="Bacteria"/>
</dbReference>
<dbReference type="HOGENOM" id="CLU_033198_1_0_6"/>
<dbReference type="InParanoid" id="P37758"/>
<dbReference type="OMA" id="GIITVQM"/>
<dbReference type="OrthoDB" id="9771451at2"/>
<dbReference type="PhylomeDB" id="P37758"/>
<dbReference type="BioCyc" id="EcoCyc:NARU-MONOMER"/>
<dbReference type="BioCyc" id="MetaCyc:NARU-MONOMER"/>
<dbReference type="BRENDA" id="7.3.2.4">
    <property type="organism ID" value="2026"/>
</dbReference>
<dbReference type="EvolutionaryTrace" id="P37758"/>
<dbReference type="PRO" id="PR:P37758"/>
<dbReference type="Proteomes" id="UP000000625">
    <property type="component" value="Chromosome"/>
</dbReference>
<dbReference type="GO" id="GO:0005886">
    <property type="term" value="C:plasma membrane"/>
    <property type="evidence" value="ECO:0000314"/>
    <property type="project" value="EcoCyc"/>
</dbReference>
<dbReference type="GO" id="GO:0015112">
    <property type="term" value="F:nitrate transmembrane transporter activity"/>
    <property type="evidence" value="ECO:0000269"/>
    <property type="project" value="EcoCyc"/>
</dbReference>
<dbReference type="GO" id="GO:0015514">
    <property type="term" value="F:nitrite efflux transmembrane transporter activity"/>
    <property type="evidence" value="ECO:0000269"/>
    <property type="project" value="EcoCyc"/>
</dbReference>
<dbReference type="GO" id="GO:0042128">
    <property type="term" value="P:nitrate assimilation"/>
    <property type="evidence" value="ECO:0007669"/>
    <property type="project" value="UniProtKB-KW"/>
</dbReference>
<dbReference type="GO" id="GO:0015706">
    <property type="term" value="P:nitrate transmembrane transport"/>
    <property type="evidence" value="ECO:0000269"/>
    <property type="project" value="EcoCyc"/>
</dbReference>
<dbReference type="GO" id="GO:0015707">
    <property type="term" value="P:nitrite transport"/>
    <property type="evidence" value="ECO:0000269"/>
    <property type="project" value="EcoCyc"/>
</dbReference>
<dbReference type="CDD" id="cd17341">
    <property type="entry name" value="MFS_NRT2_like"/>
    <property type="match status" value="1"/>
</dbReference>
<dbReference type="FunFam" id="1.20.1250.20:FF:000024">
    <property type="entry name" value="Nitrite extrusion protein NarK"/>
    <property type="match status" value="1"/>
</dbReference>
<dbReference type="Gene3D" id="1.20.1250.20">
    <property type="entry name" value="MFS general substrate transporter like domains"/>
    <property type="match status" value="1"/>
</dbReference>
<dbReference type="InterPro" id="IPR011701">
    <property type="entry name" value="MFS"/>
</dbReference>
<dbReference type="InterPro" id="IPR036259">
    <property type="entry name" value="MFS_trans_sf"/>
</dbReference>
<dbReference type="InterPro" id="IPR044772">
    <property type="entry name" value="NO3_transporter"/>
</dbReference>
<dbReference type="InterPro" id="IPR004737">
    <property type="entry name" value="NO3_transporter_NarK/NarU-like"/>
</dbReference>
<dbReference type="NCBIfam" id="TIGR00886">
    <property type="entry name" value="2A0108"/>
    <property type="match status" value="1"/>
</dbReference>
<dbReference type="NCBIfam" id="NF011608">
    <property type="entry name" value="PRK15034.1"/>
    <property type="match status" value="1"/>
</dbReference>
<dbReference type="PANTHER" id="PTHR23515">
    <property type="entry name" value="HIGH-AFFINITY NITRATE TRANSPORTER 2.3"/>
    <property type="match status" value="1"/>
</dbReference>
<dbReference type="Pfam" id="PF07690">
    <property type="entry name" value="MFS_1"/>
    <property type="match status" value="1"/>
</dbReference>
<dbReference type="SUPFAM" id="SSF103473">
    <property type="entry name" value="MFS general substrate transporter"/>
    <property type="match status" value="1"/>
</dbReference>
<gene>
    <name type="primary">narU</name>
    <name type="synonym">yddF</name>
    <name type="ordered locus">b1469</name>
    <name type="ordered locus">JW1464</name>
</gene>